<reference key="1">
    <citation type="journal article" date="1997" name="Syst. Biol.">
        <title>Multiple sources of character information and the phylogeny of Hawaiian Drosophilids.</title>
        <authorList>
            <person name="Baker R.H."/>
            <person name="DeSalle R."/>
        </authorList>
    </citation>
    <scope>NUCLEOTIDE SEQUENCE [GENOMIC DNA]</scope>
</reference>
<gene>
    <name type="primary">hb</name>
</gene>
<evidence type="ECO:0000250" key="1"/>
<evidence type="ECO:0000256" key="2">
    <source>
        <dbReference type="SAM" id="MobiDB-lite"/>
    </source>
</evidence>
<evidence type="ECO:0000305" key="3"/>
<proteinExistence type="inferred from homology"/>
<name>HUNB_SCACA</name>
<keyword id="KW-0217">Developmental protein</keyword>
<keyword id="KW-0238">DNA-binding</keyword>
<keyword id="KW-0302">Gap protein</keyword>
<keyword id="KW-0479">Metal-binding</keyword>
<keyword id="KW-0539">Nucleus</keyword>
<keyword id="KW-0677">Repeat</keyword>
<keyword id="KW-0862">Zinc</keyword>
<keyword id="KW-0863">Zinc-finger</keyword>
<comment type="function">
    <text evidence="1">Gap class segmentation protein that controls development of head structures.</text>
</comment>
<comment type="subcellular location">
    <subcellularLocation>
        <location evidence="1">Nucleus</location>
    </subcellularLocation>
</comment>
<comment type="similarity">
    <text evidence="3">Belongs to the hunchback C2H2-type zinc-finger protein family.</text>
</comment>
<protein>
    <recommendedName>
        <fullName>Protein hunchback</fullName>
    </recommendedName>
</protein>
<organism>
    <name type="scientific">Scaptomyza crassifemur</name>
    <name type="common">Fruit fly</name>
    <name type="synonym">Drosophila crassifemur</name>
    <dbReference type="NCBI Taxonomy" id="13053"/>
    <lineage>
        <taxon>Eukaryota</taxon>
        <taxon>Metazoa</taxon>
        <taxon>Ecdysozoa</taxon>
        <taxon>Arthropoda</taxon>
        <taxon>Hexapoda</taxon>
        <taxon>Insecta</taxon>
        <taxon>Pterygota</taxon>
        <taxon>Neoptera</taxon>
        <taxon>Endopterygota</taxon>
        <taxon>Diptera</taxon>
        <taxon>Brachycera</taxon>
        <taxon>Muscomorpha</taxon>
        <taxon>Ephydroidea</taxon>
        <taxon>Drosophilidae</taxon>
        <taxon>Scaptomyza</taxon>
    </lineage>
</organism>
<sequence>WYSSMFAANIKQEPMSHHHHHSHHHGHHHMLQHSNSNRNASSPRQSPLPSPNPPSSSNLHLEQYLKQQHQQHQQQQQQPMDTLCAAAMTPSPSNNDQNSPLTPPGLPNPMQIIMPANMRPATQPTPTIATPTTTSSAIVALQTNDKLQALTPPMDVTPPKSPAKSQQSCAEPEKDHDLISNSSEDMKYMA</sequence>
<dbReference type="EMBL" id="U93000">
    <property type="protein sequence ID" value="AAC03248.1"/>
    <property type="molecule type" value="Genomic_DNA"/>
</dbReference>
<dbReference type="EMBL" id="U93001">
    <property type="protein sequence ID" value="AAC03249.1"/>
    <property type="molecule type" value="Genomic_DNA"/>
</dbReference>
<dbReference type="GO" id="GO:0005634">
    <property type="term" value="C:nucleus"/>
    <property type="evidence" value="ECO:0007669"/>
    <property type="project" value="UniProtKB-SubCell"/>
</dbReference>
<dbReference type="GO" id="GO:0003677">
    <property type="term" value="F:DNA binding"/>
    <property type="evidence" value="ECO:0007669"/>
    <property type="project" value="UniProtKB-KW"/>
</dbReference>
<dbReference type="GO" id="GO:0008270">
    <property type="term" value="F:zinc ion binding"/>
    <property type="evidence" value="ECO:0007669"/>
    <property type="project" value="UniProtKB-KW"/>
</dbReference>
<dbReference type="GO" id="GO:0035282">
    <property type="term" value="P:segmentation"/>
    <property type="evidence" value="ECO:0007669"/>
    <property type="project" value="UniProtKB-KW"/>
</dbReference>
<accession>O46236</accession>
<accession>O46237</accession>
<feature type="chain" id="PRO_0000046951" description="Protein hunchback">
    <location>
        <begin position="1" status="less than"/>
        <end position="190" status="greater than"/>
    </location>
</feature>
<feature type="region of interest" description="Disordered" evidence="2">
    <location>
        <begin position="13"/>
        <end position="59"/>
    </location>
</feature>
<feature type="region of interest" description="Disordered" evidence="2">
    <location>
        <begin position="86"/>
        <end position="110"/>
    </location>
</feature>
<feature type="region of interest" description="Disordered" evidence="2">
    <location>
        <begin position="142"/>
        <end position="190"/>
    </location>
</feature>
<feature type="compositionally biased region" description="Basic residues" evidence="2">
    <location>
        <begin position="17"/>
        <end position="31"/>
    </location>
</feature>
<feature type="compositionally biased region" description="Polar residues" evidence="2">
    <location>
        <begin position="90"/>
        <end position="100"/>
    </location>
</feature>
<feature type="compositionally biased region" description="Basic and acidic residues" evidence="2">
    <location>
        <begin position="171"/>
        <end position="190"/>
    </location>
</feature>
<feature type="non-consecutive residues" evidence="3">
    <location>
        <begin position="99"/>
        <end position="100"/>
    </location>
</feature>
<feature type="non-terminal residue">
    <location>
        <position position="1"/>
    </location>
</feature>
<feature type="non-terminal residue">
    <location>
        <position position="190"/>
    </location>
</feature>